<name>APTH1_DEBHA</name>
<protein>
    <recommendedName>
        <fullName>Acyl-protein thioesterase 1</fullName>
        <ecNumber evidence="2">3.1.2.-</ecNumber>
    </recommendedName>
    <alternativeName>
        <fullName>Palmitoyl-protein hydrolase</fullName>
        <ecNumber evidence="2">3.1.2.22</ecNumber>
    </alternativeName>
</protein>
<evidence type="ECO:0000250" key="1"/>
<evidence type="ECO:0000250" key="2">
    <source>
        <dbReference type="UniProtKB" id="Q12354"/>
    </source>
</evidence>
<evidence type="ECO:0000305" key="3"/>
<organism>
    <name type="scientific">Debaryomyces hansenii (strain ATCC 36239 / CBS 767 / BCRC 21394 / JCM 1990 / NBRC 0083 / IGC 2968)</name>
    <name type="common">Yeast</name>
    <name type="synonym">Torulaspora hansenii</name>
    <dbReference type="NCBI Taxonomy" id="284592"/>
    <lineage>
        <taxon>Eukaryota</taxon>
        <taxon>Fungi</taxon>
        <taxon>Dikarya</taxon>
        <taxon>Ascomycota</taxon>
        <taxon>Saccharomycotina</taxon>
        <taxon>Pichiomycetes</taxon>
        <taxon>Debaryomycetaceae</taxon>
        <taxon>Debaryomyces</taxon>
    </lineage>
</organism>
<comment type="function">
    <text evidence="2">Hydrolyzes fatty acids from S-acylated cysteine residues in proteins with a strong preference for palmitoylated G-alpha proteins over other acyl substrates. Mediates the deacylation of G-alpha proteins such as GPA1 in vivo, but has weak or no activity toward palmitoylated Ras proteins. Has weak lysophospholipase activity in vitro; however such activity may not exist in vivo.</text>
</comment>
<comment type="catalytic activity">
    <reaction evidence="2">
        <text>S-hexadecanoyl-L-cysteinyl-[protein] + H2O = L-cysteinyl-[protein] + hexadecanoate + H(+)</text>
        <dbReference type="Rhea" id="RHEA:19233"/>
        <dbReference type="Rhea" id="RHEA-COMP:10131"/>
        <dbReference type="Rhea" id="RHEA-COMP:11032"/>
        <dbReference type="ChEBI" id="CHEBI:7896"/>
        <dbReference type="ChEBI" id="CHEBI:15377"/>
        <dbReference type="ChEBI" id="CHEBI:15378"/>
        <dbReference type="ChEBI" id="CHEBI:29950"/>
        <dbReference type="ChEBI" id="CHEBI:74151"/>
        <dbReference type="EC" id="3.1.2.22"/>
    </reaction>
</comment>
<comment type="subcellular location">
    <subcellularLocation>
        <location evidence="2">Cytoplasm</location>
    </subcellularLocation>
    <subcellularLocation>
        <location evidence="2">Nucleus</location>
    </subcellularLocation>
</comment>
<comment type="similarity">
    <text evidence="3">Belongs to the AB hydrolase superfamily. AB hydrolase 2 family.</text>
</comment>
<reference key="1">
    <citation type="journal article" date="2004" name="Nature">
        <title>Genome evolution in yeasts.</title>
        <authorList>
            <person name="Dujon B."/>
            <person name="Sherman D."/>
            <person name="Fischer G."/>
            <person name="Durrens P."/>
            <person name="Casaregola S."/>
            <person name="Lafontaine I."/>
            <person name="de Montigny J."/>
            <person name="Marck C."/>
            <person name="Neuveglise C."/>
            <person name="Talla E."/>
            <person name="Goffard N."/>
            <person name="Frangeul L."/>
            <person name="Aigle M."/>
            <person name="Anthouard V."/>
            <person name="Babour A."/>
            <person name="Barbe V."/>
            <person name="Barnay S."/>
            <person name="Blanchin S."/>
            <person name="Beckerich J.-M."/>
            <person name="Beyne E."/>
            <person name="Bleykasten C."/>
            <person name="Boisrame A."/>
            <person name="Boyer J."/>
            <person name="Cattolico L."/>
            <person name="Confanioleri F."/>
            <person name="de Daruvar A."/>
            <person name="Despons L."/>
            <person name="Fabre E."/>
            <person name="Fairhead C."/>
            <person name="Ferry-Dumazet H."/>
            <person name="Groppi A."/>
            <person name="Hantraye F."/>
            <person name="Hennequin C."/>
            <person name="Jauniaux N."/>
            <person name="Joyet P."/>
            <person name="Kachouri R."/>
            <person name="Kerrest A."/>
            <person name="Koszul R."/>
            <person name="Lemaire M."/>
            <person name="Lesur I."/>
            <person name="Ma L."/>
            <person name="Muller H."/>
            <person name="Nicaud J.-M."/>
            <person name="Nikolski M."/>
            <person name="Oztas S."/>
            <person name="Ozier-Kalogeropoulos O."/>
            <person name="Pellenz S."/>
            <person name="Potier S."/>
            <person name="Richard G.-F."/>
            <person name="Straub M.-L."/>
            <person name="Suleau A."/>
            <person name="Swennen D."/>
            <person name="Tekaia F."/>
            <person name="Wesolowski-Louvel M."/>
            <person name="Westhof E."/>
            <person name="Wirth B."/>
            <person name="Zeniou-Meyer M."/>
            <person name="Zivanovic Y."/>
            <person name="Bolotin-Fukuhara M."/>
            <person name="Thierry A."/>
            <person name="Bouchier C."/>
            <person name="Caudron B."/>
            <person name="Scarpelli C."/>
            <person name="Gaillardin C."/>
            <person name="Weissenbach J."/>
            <person name="Wincker P."/>
            <person name="Souciet J.-L."/>
        </authorList>
    </citation>
    <scope>NUCLEOTIDE SEQUENCE [LARGE SCALE GENOMIC DNA]</scope>
    <source>
        <strain>ATCC 36239 / CBS 767 / BCRC 21394 / JCM 1990 / NBRC 0083 / IGC 2968</strain>
    </source>
</reference>
<feature type="chain" id="PRO_0000229008" description="Acyl-protein thioesterase 1">
    <location>
        <begin position="1"/>
        <end position="232"/>
    </location>
</feature>
<feature type="active site" description="Charge relay system" evidence="1">
    <location>
        <position position="125"/>
    </location>
</feature>
<feature type="active site" description="Charge relay system" evidence="1">
    <location>
        <position position="179"/>
    </location>
</feature>
<feature type="active site" description="Charge relay system" evidence="1">
    <location>
        <position position="212"/>
    </location>
</feature>
<keyword id="KW-0963">Cytoplasm</keyword>
<keyword id="KW-0276">Fatty acid metabolism</keyword>
<keyword id="KW-0378">Hydrolase</keyword>
<keyword id="KW-0443">Lipid metabolism</keyword>
<keyword id="KW-0539">Nucleus</keyword>
<keyword id="KW-1185">Reference proteome</keyword>
<keyword id="KW-0719">Serine esterase</keyword>
<proteinExistence type="inferred from homology"/>
<accession>Q6BSS8</accession>
<gene>
    <name type="ordered locus">DEHA2D06534g</name>
</gene>
<sequence length="232" mass="25117">MSQLIPAVRVAATAKPAKSAIIFVHGLGDSGSGWSWFPQLAKQSNIIKNCDSINYVFPNAPLMPITANGGYVMPGWFDIYEFGNPEAKQDIDGFHKSCETLKSLIKEQIDNHDIPADKIIIGGFSQGAAVSLATVALLDFKVGGVVALSGFSPIKESLPQIMNKANLETPIFQGHGTADPIVNFDFGKQTSELYQKLGFKNVKFHTYPGVAHSASEEELADAMNFIDDVLKK</sequence>
<dbReference type="EC" id="3.1.2.-" evidence="2"/>
<dbReference type="EC" id="3.1.2.22" evidence="2"/>
<dbReference type="EMBL" id="CR382136">
    <property type="protein sequence ID" value="CAG86886.2"/>
    <property type="molecule type" value="Genomic_DNA"/>
</dbReference>
<dbReference type="RefSeq" id="XP_458742.2">
    <property type="nucleotide sequence ID" value="XM_458742.2"/>
</dbReference>
<dbReference type="SMR" id="Q6BSS8"/>
<dbReference type="FunCoup" id="Q6BSS8">
    <property type="interactions" value="491"/>
</dbReference>
<dbReference type="STRING" id="284592.Q6BSS8"/>
<dbReference type="ESTHER" id="debha-apth1">
    <property type="family name" value="LYsophospholipase_carboxylesterase"/>
</dbReference>
<dbReference type="MEROPS" id="S09.941"/>
<dbReference type="GeneID" id="2901527"/>
<dbReference type="KEGG" id="dha:DEHA2D06534g"/>
<dbReference type="VEuPathDB" id="FungiDB:DEHA2D06534g"/>
<dbReference type="eggNOG" id="KOG2112">
    <property type="taxonomic scope" value="Eukaryota"/>
</dbReference>
<dbReference type="HOGENOM" id="CLU_049413_3_3_1"/>
<dbReference type="InParanoid" id="Q6BSS8"/>
<dbReference type="OMA" id="LMFRTYN"/>
<dbReference type="OrthoDB" id="2418081at2759"/>
<dbReference type="Proteomes" id="UP000000599">
    <property type="component" value="Chromosome D"/>
</dbReference>
<dbReference type="GO" id="GO:0005737">
    <property type="term" value="C:cytoplasm"/>
    <property type="evidence" value="ECO:0007669"/>
    <property type="project" value="UniProtKB-SubCell"/>
</dbReference>
<dbReference type="GO" id="GO:0005634">
    <property type="term" value="C:nucleus"/>
    <property type="evidence" value="ECO:0007669"/>
    <property type="project" value="UniProtKB-SubCell"/>
</dbReference>
<dbReference type="GO" id="GO:0052689">
    <property type="term" value="F:carboxylic ester hydrolase activity"/>
    <property type="evidence" value="ECO:0007669"/>
    <property type="project" value="UniProtKB-KW"/>
</dbReference>
<dbReference type="GO" id="GO:0008474">
    <property type="term" value="F:palmitoyl-(protein) hydrolase activity"/>
    <property type="evidence" value="ECO:0007669"/>
    <property type="project" value="EnsemblFungi"/>
</dbReference>
<dbReference type="GO" id="GO:0006631">
    <property type="term" value="P:fatty acid metabolic process"/>
    <property type="evidence" value="ECO:0007669"/>
    <property type="project" value="UniProtKB-KW"/>
</dbReference>
<dbReference type="Gene3D" id="3.40.50.1820">
    <property type="entry name" value="alpha/beta hydrolase"/>
    <property type="match status" value="1"/>
</dbReference>
<dbReference type="InterPro" id="IPR029058">
    <property type="entry name" value="AB_hydrolase_fold"/>
</dbReference>
<dbReference type="InterPro" id="IPR050565">
    <property type="entry name" value="LYPA1-2/EST-like"/>
</dbReference>
<dbReference type="InterPro" id="IPR003140">
    <property type="entry name" value="PLipase/COase/thioEstase"/>
</dbReference>
<dbReference type="PANTHER" id="PTHR10655:SF17">
    <property type="entry name" value="LYSOPHOSPHOLIPASE-LIKE PROTEIN 1"/>
    <property type="match status" value="1"/>
</dbReference>
<dbReference type="PANTHER" id="PTHR10655">
    <property type="entry name" value="LYSOPHOSPHOLIPASE-RELATED"/>
    <property type="match status" value="1"/>
</dbReference>
<dbReference type="Pfam" id="PF02230">
    <property type="entry name" value="Abhydrolase_2"/>
    <property type="match status" value="1"/>
</dbReference>
<dbReference type="SUPFAM" id="SSF53474">
    <property type="entry name" value="alpha/beta-Hydrolases"/>
    <property type="match status" value="1"/>
</dbReference>